<evidence type="ECO:0000255" key="1">
    <source>
        <dbReference type="HAMAP-Rule" id="MF_00021"/>
    </source>
</evidence>
<accession>Q2RM06</accession>
<gene>
    <name evidence="1" type="primary">thiI</name>
    <name type="ordered locus">Moth_0198</name>
</gene>
<dbReference type="EC" id="2.8.1.4" evidence="1"/>
<dbReference type="EMBL" id="CP000232">
    <property type="protein sequence ID" value="ABC18533.1"/>
    <property type="molecule type" value="Genomic_DNA"/>
</dbReference>
<dbReference type="RefSeq" id="YP_429076.1">
    <property type="nucleotide sequence ID" value="NC_007644.1"/>
</dbReference>
<dbReference type="SMR" id="Q2RM06"/>
<dbReference type="STRING" id="264732.Moth_0198"/>
<dbReference type="EnsemblBacteria" id="ABC18533">
    <property type="protein sequence ID" value="ABC18533"/>
    <property type="gene ID" value="Moth_0198"/>
</dbReference>
<dbReference type="KEGG" id="mta:Moth_0198"/>
<dbReference type="PATRIC" id="fig|264732.11.peg.210"/>
<dbReference type="eggNOG" id="COG0301">
    <property type="taxonomic scope" value="Bacteria"/>
</dbReference>
<dbReference type="HOGENOM" id="CLU_037952_4_0_9"/>
<dbReference type="OrthoDB" id="9773948at2"/>
<dbReference type="UniPathway" id="UPA00060"/>
<dbReference type="GO" id="GO:0005829">
    <property type="term" value="C:cytosol"/>
    <property type="evidence" value="ECO:0007669"/>
    <property type="project" value="TreeGrafter"/>
</dbReference>
<dbReference type="GO" id="GO:0005524">
    <property type="term" value="F:ATP binding"/>
    <property type="evidence" value="ECO:0007669"/>
    <property type="project" value="UniProtKB-UniRule"/>
</dbReference>
<dbReference type="GO" id="GO:0004810">
    <property type="term" value="F:CCA tRNA nucleotidyltransferase activity"/>
    <property type="evidence" value="ECO:0007669"/>
    <property type="project" value="InterPro"/>
</dbReference>
<dbReference type="GO" id="GO:0000049">
    <property type="term" value="F:tRNA binding"/>
    <property type="evidence" value="ECO:0007669"/>
    <property type="project" value="UniProtKB-UniRule"/>
</dbReference>
<dbReference type="GO" id="GO:0140741">
    <property type="term" value="F:tRNA-uracil-4 sulfurtransferase activity"/>
    <property type="evidence" value="ECO:0007669"/>
    <property type="project" value="UniProtKB-EC"/>
</dbReference>
<dbReference type="GO" id="GO:0009228">
    <property type="term" value="P:thiamine biosynthetic process"/>
    <property type="evidence" value="ECO:0007669"/>
    <property type="project" value="UniProtKB-KW"/>
</dbReference>
<dbReference type="GO" id="GO:0009229">
    <property type="term" value="P:thiamine diphosphate biosynthetic process"/>
    <property type="evidence" value="ECO:0007669"/>
    <property type="project" value="UniProtKB-UniRule"/>
</dbReference>
<dbReference type="GO" id="GO:0052837">
    <property type="term" value="P:thiazole biosynthetic process"/>
    <property type="evidence" value="ECO:0007669"/>
    <property type="project" value="TreeGrafter"/>
</dbReference>
<dbReference type="GO" id="GO:0002937">
    <property type="term" value="P:tRNA 4-thiouridine biosynthesis"/>
    <property type="evidence" value="ECO:0007669"/>
    <property type="project" value="TreeGrafter"/>
</dbReference>
<dbReference type="CDD" id="cd01712">
    <property type="entry name" value="PPase_ThiI"/>
    <property type="match status" value="1"/>
</dbReference>
<dbReference type="CDD" id="cd11716">
    <property type="entry name" value="THUMP_ThiI"/>
    <property type="match status" value="1"/>
</dbReference>
<dbReference type="FunFam" id="3.40.50.620:FF:000053">
    <property type="entry name" value="Probable tRNA sulfurtransferase"/>
    <property type="match status" value="1"/>
</dbReference>
<dbReference type="Gene3D" id="3.30.2130.30">
    <property type="match status" value="1"/>
</dbReference>
<dbReference type="Gene3D" id="3.40.50.620">
    <property type="entry name" value="HUPs"/>
    <property type="match status" value="1"/>
</dbReference>
<dbReference type="HAMAP" id="MF_00021">
    <property type="entry name" value="ThiI"/>
    <property type="match status" value="1"/>
</dbReference>
<dbReference type="InterPro" id="IPR014729">
    <property type="entry name" value="Rossmann-like_a/b/a_fold"/>
</dbReference>
<dbReference type="InterPro" id="IPR020536">
    <property type="entry name" value="ThiI_AANH"/>
</dbReference>
<dbReference type="InterPro" id="IPR054173">
    <property type="entry name" value="ThiI_fer"/>
</dbReference>
<dbReference type="InterPro" id="IPR049961">
    <property type="entry name" value="ThiI_N"/>
</dbReference>
<dbReference type="InterPro" id="IPR004114">
    <property type="entry name" value="THUMP_dom"/>
</dbReference>
<dbReference type="InterPro" id="IPR049962">
    <property type="entry name" value="THUMP_ThiI"/>
</dbReference>
<dbReference type="InterPro" id="IPR003720">
    <property type="entry name" value="tRNA_STrfase"/>
</dbReference>
<dbReference type="InterPro" id="IPR050102">
    <property type="entry name" value="tRNA_sulfurtransferase_ThiI"/>
</dbReference>
<dbReference type="NCBIfam" id="TIGR00342">
    <property type="entry name" value="tRNA uracil 4-sulfurtransferase ThiI"/>
    <property type="match status" value="1"/>
</dbReference>
<dbReference type="PANTHER" id="PTHR43209">
    <property type="entry name" value="TRNA SULFURTRANSFERASE"/>
    <property type="match status" value="1"/>
</dbReference>
<dbReference type="PANTHER" id="PTHR43209:SF1">
    <property type="entry name" value="TRNA SULFURTRANSFERASE"/>
    <property type="match status" value="1"/>
</dbReference>
<dbReference type="Pfam" id="PF02568">
    <property type="entry name" value="ThiI"/>
    <property type="match status" value="1"/>
</dbReference>
<dbReference type="Pfam" id="PF22025">
    <property type="entry name" value="ThiI_fer"/>
    <property type="match status" value="1"/>
</dbReference>
<dbReference type="Pfam" id="PF02926">
    <property type="entry name" value="THUMP"/>
    <property type="match status" value="1"/>
</dbReference>
<dbReference type="SMART" id="SM00981">
    <property type="entry name" value="THUMP"/>
    <property type="match status" value="1"/>
</dbReference>
<dbReference type="SUPFAM" id="SSF52402">
    <property type="entry name" value="Adenine nucleotide alpha hydrolases-like"/>
    <property type="match status" value="1"/>
</dbReference>
<dbReference type="SUPFAM" id="SSF143437">
    <property type="entry name" value="THUMP domain-like"/>
    <property type="match status" value="1"/>
</dbReference>
<dbReference type="PROSITE" id="PS51165">
    <property type="entry name" value="THUMP"/>
    <property type="match status" value="1"/>
</dbReference>
<name>THII_MOOTA</name>
<protein>
    <recommendedName>
        <fullName evidence="1">Probable tRNA sulfurtransferase</fullName>
        <ecNumber evidence="1">2.8.1.4</ecNumber>
    </recommendedName>
    <alternativeName>
        <fullName evidence="1">Sulfur carrier protein ThiS sulfurtransferase</fullName>
    </alternativeName>
    <alternativeName>
        <fullName evidence="1">Thiamine biosynthesis protein ThiI</fullName>
    </alternativeName>
    <alternativeName>
        <fullName evidence="1">tRNA 4-thiouridine synthase</fullName>
    </alternativeName>
</protein>
<comment type="function">
    <text evidence="1">Catalyzes the ATP-dependent transfer of a sulfur to tRNA to produce 4-thiouridine in position 8 of tRNAs, which functions as a near-UV photosensor. Also catalyzes the transfer of sulfur to the sulfur carrier protein ThiS, forming ThiS-thiocarboxylate. This is a step in the synthesis of thiazole, in the thiamine biosynthesis pathway. The sulfur is donated as persulfide by IscS.</text>
</comment>
<comment type="catalytic activity">
    <reaction evidence="1">
        <text>[ThiI sulfur-carrier protein]-S-sulfanyl-L-cysteine + a uridine in tRNA + 2 reduced [2Fe-2S]-[ferredoxin] + ATP + H(+) = [ThiI sulfur-carrier protein]-L-cysteine + a 4-thiouridine in tRNA + 2 oxidized [2Fe-2S]-[ferredoxin] + AMP + diphosphate</text>
        <dbReference type="Rhea" id="RHEA:24176"/>
        <dbReference type="Rhea" id="RHEA-COMP:10000"/>
        <dbReference type="Rhea" id="RHEA-COMP:10001"/>
        <dbReference type="Rhea" id="RHEA-COMP:13337"/>
        <dbReference type="Rhea" id="RHEA-COMP:13338"/>
        <dbReference type="Rhea" id="RHEA-COMP:13339"/>
        <dbReference type="Rhea" id="RHEA-COMP:13340"/>
        <dbReference type="ChEBI" id="CHEBI:15378"/>
        <dbReference type="ChEBI" id="CHEBI:29950"/>
        <dbReference type="ChEBI" id="CHEBI:30616"/>
        <dbReference type="ChEBI" id="CHEBI:33019"/>
        <dbReference type="ChEBI" id="CHEBI:33737"/>
        <dbReference type="ChEBI" id="CHEBI:33738"/>
        <dbReference type="ChEBI" id="CHEBI:61963"/>
        <dbReference type="ChEBI" id="CHEBI:65315"/>
        <dbReference type="ChEBI" id="CHEBI:136798"/>
        <dbReference type="ChEBI" id="CHEBI:456215"/>
        <dbReference type="EC" id="2.8.1.4"/>
    </reaction>
</comment>
<comment type="catalytic activity">
    <reaction evidence="1">
        <text>[ThiS sulfur-carrier protein]-C-terminal Gly-Gly-AMP + S-sulfanyl-L-cysteinyl-[cysteine desulfurase] + AH2 = [ThiS sulfur-carrier protein]-C-terminal-Gly-aminoethanethioate + L-cysteinyl-[cysteine desulfurase] + A + AMP + 2 H(+)</text>
        <dbReference type="Rhea" id="RHEA:43340"/>
        <dbReference type="Rhea" id="RHEA-COMP:12157"/>
        <dbReference type="Rhea" id="RHEA-COMP:12158"/>
        <dbReference type="Rhea" id="RHEA-COMP:12910"/>
        <dbReference type="Rhea" id="RHEA-COMP:19908"/>
        <dbReference type="ChEBI" id="CHEBI:13193"/>
        <dbReference type="ChEBI" id="CHEBI:15378"/>
        <dbReference type="ChEBI" id="CHEBI:17499"/>
        <dbReference type="ChEBI" id="CHEBI:29950"/>
        <dbReference type="ChEBI" id="CHEBI:61963"/>
        <dbReference type="ChEBI" id="CHEBI:90618"/>
        <dbReference type="ChEBI" id="CHEBI:232372"/>
        <dbReference type="ChEBI" id="CHEBI:456215"/>
    </reaction>
</comment>
<comment type="pathway">
    <text evidence="1">Cofactor biosynthesis; thiamine diphosphate biosynthesis.</text>
</comment>
<comment type="subcellular location">
    <subcellularLocation>
        <location evidence="1">Cytoplasm</location>
    </subcellularLocation>
</comment>
<comment type="similarity">
    <text evidence="1">Belongs to the ThiI family.</text>
</comment>
<reference key="1">
    <citation type="journal article" date="2008" name="Environ. Microbiol.">
        <title>The complete genome sequence of Moorella thermoacetica (f. Clostridium thermoaceticum).</title>
        <authorList>
            <person name="Pierce E."/>
            <person name="Xie G."/>
            <person name="Barabote R.D."/>
            <person name="Saunders E."/>
            <person name="Han C.S."/>
            <person name="Detter J.C."/>
            <person name="Richardson P."/>
            <person name="Brettin T.S."/>
            <person name="Das A."/>
            <person name="Ljungdahl L.G."/>
            <person name="Ragsdale S.W."/>
        </authorList>
    </citation>
    <scope>NUCLEOTIDE SEQUENCE [LARGE SCALE GENOMIC DNA]</scope>
    <source>
        <strain>ATCC 39073 / JCM 9320</strain>
    </source>
</reference>
<keyword id="KW-0067">ATP-binding</keyword>
<keyword id="KW-0963">Cytoplasm</keyword>
<keyword id="KW-0547">Nucleotide-binding</keyword>
<keyword id="KW-0694">RNA-binding</keyword>
<keyword id="KW-0784">Thiamine biosynthesis</keyword>
<keyword id="KW-0808">Transferase</keyword>
<keyword id="KW-0820">tRNA-binding</keyword>
<organism>
    <name type="scientific">Moorella thermoacetica (strain ATCC 39073 / JCM 9320)</name>
    <dbReference type="NCBI Taxonomy" id="264732"/>
    <lineage>
        <taxon>Bacteria</taxon>
        <taxon>Bacillati</taxon>
        <taxon>Bacillota</taxon>
        <taxon>Clostridia</taxon>
        <taxon>Moorellales</taxon>
        <taxon>Moorellaceae</taxon>
        <taxon>Moorella</taxon>
    </lineage>
</organism>
<feature type="chain" id="PRO_1000074245" description="Probable tRNA sulfurtransferase">
    <location>
        <begin position="1"/>
        <end position="390"/>
    </location>
</feature>
<feature type="domain" description="THUMP" evidence="1">
    <location>
        <begin position="58"/>
        <end position="161"/>
    </location>
</feature>
<feature type="binding site" evidence="1">
    <location>
        <begin position="179"/>
        <end position="180"/>
    </location>
    <ligand>
        <name>ATP</name>
        <dbReference type="ChEBI" id="CHEBI:30616"/>
    </ligand>
</feature>
<feature type="binding site" evidence="1">
    <location>
        <begin position="204"/>
        <end position="205"/>
    </location>
    <ligand>
        <name>ATP</name>
        <dbReference type="ChEBI" id="CHEBI:30616"/>
    </ligand>
</feature>
<feature type="binding site" evidence="1">
    <location>
        <position position="261"/>
    </location>
    <ligand>
        <name>ATP</name>
        <dbReference type="ChEBI" id="CHEBI:30616"/>
    </ligand>
</feature>
<feature type="binding site" evidence="1">
    <location>
        <position position="283"/>
    </location>
    <ligand>
        <name>ATP</name>
        <dbReference type="ChEBI" id="CHEBI:30616"/>
    </ligand>
</feature>
<feature type="binding site" evidence="1">
    <location>
        <position position="292"/>
    </location>
    <ligand>
        <name>ATP</name>
        <dbReference type="ChEBI" id="CHEBI:30616"/>
    </ligand>
</feature>
<proteinExistence type="inferred from homology"/>
<sequence length="390" mass="43237">MYTSLLVRYGEISLKGNNRPYFEDKLLANMRRALAGLPPRRMRKTFGRVFVELHDDLEAVARRLQRVFGIVSMSPVATAPLELEAIKKAALAVLKDSPGSTFKVQAQRPNKRFPLTSPEVNQELGAYLLTHSQGQRVDVHHPDRVIHVEIRDEGAYIYSRIIPGPGGLPVGVTGRGLLLISGGIDSPVAGYMGMKRGLELTALHFHSFPFTSERSKEKVIDLCRVLAGYSGPLRLVVAPFTNIQKAIRQNCPQEFYVTIMRRMMFRIARAVAAKEEAPAILTGESLGQVASQTLQSMAVINKVVDLPVLRPLVAWDKSEIIEVARRIGTYDISIRPYEDCCTLFVPKHPATKPPLARVEAAEKNLAVVELVAECLENLEILTVEPEADVV</sequence>